<evidence type="ECO:0000255" key="1"/>
<evidence type="ECO:0000269" key="2">
    <source>
    </source>
</evidence>
<evidence type="ECO:0000269" key="3">
    <source>
    </source>
</evidence>
<evidence type="ECO:0000269" key="4">
    <source>
    </source>
</evidence>
<evidence type="ECO:0000269" key="5">
    <source>
    </source>
</evidence>
<evidence type="ECO:0000269" key="6">
    <source>
    </source>
</evidence>
<evidence type="ECO:0000269" key="7">
    <source>
    </source>
</evidence>
<evidence type="ECO:0000303" key="8">
    <source>
    </source>
</evidence>
<evidence type="ECO:0000303" key="9">
    <source ref="5"/>
</evidence>
<evidence type="ECO:0000305" key="10"/>
<evidence type="ECO:0007744" key="11">
    <source>
    </source>
</evidence>
<gene>
    <name type="primary">PSBQ1</name>
    <name type="synonym">PSBQ</name>
    <name type="synonym">PSBQA</name>
    <name type="ordered locus">At4g21280</name>
    <name type="ORF">F7J7.220</name>
    <name type="ORF">T6K22.20</name>
</gene>
<accession>Q9XFT3</accession>
<accession>O49568</accession>
<accession>Q2V3G5</accession>
<reference key="1">
    <citation type="journal article" date="1999" name="DNA Res.">
        <title>Nucleotide sequence of psbQ gene for 16-kDa protein of oxygen-evolving complex from Arabidopsis thaliana and regulation of its expression.</title>
        <authorList>
            <person name="Grover M."/>
            <person name="Gaur T."/>
            <person name="Kochhar A."/>
            <person name="Maheshwari S.C."/>
            <person name="Tyagi A.K."/>
        </authorList>
    </citation>
    <scope>NUCLEOTIDE SEQUENCE [GENOMIC DNA]</scope>
    <scope>INDUCTION BY LIGHT</scope>
    <source>
        <strain>cv. Columbia</strain>
    </source>
</reference>
<reference key="2">
    <citation type="journal article" date="1999" name="Nature">
        <title>Sequence and analysis of chromosome 4 of the plant Arabidopsis thaliana.</title>
        <authorList>
            <person name="Mayer K.F.X."/>
            <person name="Schueller C."/>
            <person name="Wambutt R."/>
            <person name="Murphy G."/>
            <person name="Volckaert G."/>
            <person name="Pohl T."/>
            <person name="Duesterhoeft A."/>
            <person name="Stiekema W."/>
            <person name="Entian K.-D."/>
            <person name="Terryn N."/>
            <person name="Harris B."/>
            <person name="Ansorge W."/>
            <person name="Brandt P."/>
            <person name="Grivell L.A."/>
            <person name="Rieger M."/>
            <person name="Weichselgartner M."/>
            <person name="de Simone V."/>
            <person name="Obermaier B."/>
            <person name="Mache R."/>
            <person name="Mueller M."/>
            <person name="Kreis M."/>
            <person name="Delseny M."/>
            <person name="Puigdomenech P."/>
            <person name="Watson M."/>
            <person name="Schmidtheini T."/>
            <person name="Reichert B."/>
            <person name="Portetelle D."/>
            <person name="Perez-Alonso M."/>
            <person name="Boutry M."/>
            <person name="Bancroft I."/>
            <person name="Vos P."/>
            <person name="Hoheisel J."/>
            <person name="Zimmermann W."/>
            <person name="Wedler H."/>
            <person name="Ridley P."/>
            <person name="Langham S.-A."/>
            <person name="McCullagh B."/>
            <person name="Bilham L."/>
            <person name="Robben J."/>
            <person name="van der Schueren J."/>
            <person name="Grymonprez B."/>
            <person name="Chuang Y.-J."/>
            <person name="Vandenbussche F."/>
            <person name="Braeken M."/>
            <person name="Weltjens I."/>
            <person name="Voet M."/>
            <person name="Bastiaens I."/>
            <person name="Aert R."/>
            <person name="Defoor E."/>
            <person name="Weitzenegger T."/>
            <person name="Bothe G."/>
            <person name="Ramsperger U."/>
            <person name="Hilbert H."/>
            <person name="Braun M."/>
            <person name="Holzer E."/>
            <person name="Brandt A."/>
            <person name="Peters S."/>
            <person name="van Staveren M."/>
            <person name="Dirkse W."/>
            <person name="Mooijman P."/>
            <person name="Klein Lankhorst R."/>
            <person name="Rose M."/>
            <person name="Hauf J."/>
            <person name="Koetter P."/>
            <person name="Berneiser S."/>
            <person name="Hempel S."/>
            <person name="Feldpausch M."/>
            <person name="Lamberth S."/>
            <person name="Van den Daele H."/>
            <person name="De Keyser A."/>
            <person name="Buysshaert C."/>
            <person name="Gielen J."/>
            <person name="Villarroel R."/>
            <person name="De Clercq R."/>
            <person name="van Montagu M."/>
            <person name="Rogers J."/>
            <person name="Cronin A."/>
            <person name="Quail M.A."/>
            <person name="Bray-Allen S."/>
            <person name="Clark L."/>
            <person name="Doggett J."/>
            <person name="Hall S."/>
            <person name="Kay M."/>
            <person name="Lennard N."/>
            <person name="McLay K."/>
            <person name="Mayes R."/>
            <person name="Pettett A."/>
            <person name="Rajandream M.A."/>
            <person name="Lyne M."/>
            <person name="Benes V."/>
            <person name="Rechmann S."/>
            <person name="Borkova D."/>
            <person name="Bloecker H."/>
            <person name="Scharfe M."/>
            <person name="Grimm M."/>
            <person name="Loehnert T.-H."/>
            <person name="Dose S."/>
            <person name="de Haan M."/>
            <person name="Maarse A.C."/>
            <person name="Schaefer M."/>
            <person name="Mueller-Auer S."/>
            <person name="Gabel C."/>
            <person name="Fuchs M."/>
            <person name="Fartmann B."/>
            <person name="Granderath K."/>
            <person name="Dauner D."/>
            <person name="Herzl A."/>
            <person name="Neumann S."/>
            <person name="Argiriou A."/>
            <person name="Vitale D."/>
            <person name="Liguori R."/>
            <person name="Piravandi E."/>
            <person name="Massenet O."/>
            <person name="Quigley F."/>
            <person name="Clabauld G."/>
            <person name="Muendlein A."/>
            <person name="Felber R."/>
            <person name="Schnabl S."/>
            <person name="Hiller R."/>
            <person name="Schmidt W."/>
            <person name="Lecharny A."/>
            <person name="Aubourg S."/>
            <person name="Chefdor F."/>
            <person name="Cooke R."/>
            <person name="Berger C."/>
            <person name="Monfort A."/>
            <person name="Casacuberta E."/>
            <person name="Gibbons T."/>
            <person name="Weber N."/>
            <person name="Vandenbol M."/>
            <person name="Bargues M."/>
            <person name="Terol J."/>
            <person name="Torres A."/>
            <person name="Perez-Perez A."/>
            <person name="Purnelle B."/>
            <person name="Bent E."/>
            <person name="Johnson S."/>
            <person name="Tacon D."/>
            <person name="Jesse T."/>
            <person name="Heijnen L."/>
            <person name="Schwarz S."/>
            <person name="Scholler P."/>
            <person name="Heber S."/>
            <person name="Francs P."/>
            <person name="Bielke C."/>
            <person name="Frishman D."/>
            <person name="Haase D."/>
            <person name="Lemcke K."/>
            <person name="Mewes H.-W."/>
            <person name="Stocker S."/>
            <person name="Zaccaria P."/>
            <person name="Bevan M."/>
            <person name="Wilson R.K."/>
            <person name="de la Bastide M."/>
            <person name="Habermann K."/>
            <person name="Parnell L."/>
            <person name="Dedhia N."/>
            <person name="Gnoj L."/>
            <person name="Schutz K."/>
            <person name="Huang E."/>
            <person name="Spiegel L."/>
            <person name="Sekhon M."/>
            <person name="Murray J."/>
            <person name="Sheet P."/>
            <person name="Cordes M."/>
            <person name="Abu-Threideh J."/>
            <person name="Stoneking T."/>
            <person name="Kalicki J."/>
            <person name="Graves T."/>
            <person name="Harmon G."/>
            <person name="Edwards J."/>
            <person name="Latreille P."/>
            <person name="Courtney L."/>
            <person name="Cloud J."/>
            <person name="Abbott A."/>
            <person name="Scott K."/>
            <person name="Johnson D."/>
            <person name="Minx P."/>
            <person name="Bentley D."/>
            <person name="Fulton B."/>
            <person name="Miller N."/>
            <person name="Greco T."/>
            <person name="Kemp K."/>
            <person name="Kramer J."/>
            <person name="Fulton L."/>
            <person name="Mardis E."/>
            <person name="Dante M."/>
            <person name="Pepin K."/>
            <person name="Hillier L.W."/>
            <person name="Nelson J."/>
            <person name="Spieth J."/>
            <person name="Ryan E."/>
            <person name="Andrews S."/>
            <person name="Geisel C."/>
            <person name="Layman D."/>
            <person name="Du H."/>
            <person name="Ali J."/>
            <person name="Berghoff A."/>
            <person name="Jones K."/>
            <person name="Drone K."/>
            <person name="Cotton M."/>
            <person name="Joshu C."/>
            <person name="Antonoiu B."/>
            <person name="Zidanic M."/>
            <person name="Strong C."/>
            <person name="Sun H."/>
            <person name="Lamar B."/>
            <person name="Yordan C."/>
            <person name="Ma P."/>
            <person name="Zhong J."/>
            <person name="Preston R."/>
            <person name="Vil D."/>
            <person name="Shekher M."/>
            <person name="Matero A."/>
            <person name="Shah R."/>
            <person name="Swaby I.K."/>
            <person name="O'Shaughnessy A."/>
            <person name="Rodriguez M."/>
            <person name="Hoffman J."/>
            <person name="Till S."/>
            <person name="Granat S."/>
            <person name="Shohdy N."/>
            <person name="Hasegawa A."/>
            <person name="Hameed A."/>
            <person name="Lodhi M."/>
            <person name="Johnson A."/>
            <person name="Chen E."/>
            <person name="Marra M.A."/>
            <person name="Martienssen R."/>
            <person name="McCombie W.R."/>
        </authorList>
    </citation>
    <scope>NUCLEOTIDE SEQUENCE [LARGE SCALE GENOMIC DNA]</scope>
    <source>
        <strain>cv. Columbia</strain>
    </source>
</reference>
<reference key="3">
    <citation type="journal article" date="2017" name="Plant J.">
        <title>Araport11: a complete reannotation of the Arabidopsis thaliana reference genome.</title>
        <authorList>
            <person name="Cheng C.Y."/>
            <person name="Krishnakumar V."/>
            <person name="Chan A.P."/>
            <person name="Thibaud-Nissen F."/>
            <person name="Schobel S."/>
            <person name="Town C.D."/>
        </authorList>
    </citation>
    <scope>GENOME REANNOTATION</scope>
    <source>
        <strain>cv. Columbia</strain>
    </source>
</reference>
<reference key="4">
    <citation type="journal article" date="2003" name="Science">
        <title>Empirical analysis of transcriptional activity in the Arabidopsis genome.</title>
        <authorList>
            <person name="Yamada K."/>
            <person name="Lim J."/>
            <person name="Dale J.M."/>
            <person name="Chen H."/>
            <person name="Shinn P."/>
            <person name="Palm C.J."/>
            <person name="Southwick A.M."/>
            <person name="Wu H.C."/>
            <person name="Kim C.J."/>
            <person name="Nguyen M."/>
            <person name="Pham P.K."/>
            <person name="Cheuk R.F."/>
            <person name="Karlin-Newmann G."/>
            <person name="Liu S.X."/>
            <person name="Lam B."/>
            <person name="Sakano H."/>
            <person name="Wu T."/>
            <person name="Yu G."/>
            <person name="Miranda M."/>
            <person name="Quach H.L."/>
            <person name="Tripp M."/>
            <person name="Chang C.H."/>
            <person name="Lee J.M."/>
            <person name="Toriumi M.J."/>
            <person name="Chan M.M."/>
            <person name="Tang C.C."/>
            <person name="Onodera C.S."/>
            <person name="Deng J.M."/>
            <person name="Akiyama K."/>
            <person name="Ansari Y."/>
            <person name="Arakawa T."/>
            <person name="Banh J."/>
            <person name="Banno F."/>
            <person name="Bowser L."/>
            <person name="Brooks S.Y."/>
            <person name="Carninci P."/>
            <person name="Chao Q."/>
            <person name="Choy N."/>
            <person name="Enju A."/>
            <person name="Goldsmith A.D."/>
            <person name="Gurjal M."/>
            <person name="Hansen N.F."/>
            <person name="Hayashizaki Y."/>
            <person name="Johnson-Hopson C."/>
            <person name="Hsuan V.W."/>
            <person name="Iida K."/>
            <person name="Karnes M."/>
            <person name="Khan S."/>
            <person name="Koesema E."/>
            <person name="Ishida J."/>
            <person name="Jiang P.X."/>
            <person name="Jones T."/>
            <person name="Kawai J."/>
            <person name="Kamiya A."/>
            <person name="Meyers C."/>
            <person name="Nakajima M."/>
            <person name="Narusaka M."/>
            <person name="Seki M."/>
            <person name="Sakurai T."/>
            <person name="Satou M."/>
            <person name="Tamse R."/>
            <person name="Vaysberg M."/>
            <person name="Wallender E.K."/>
            <person name="Wong C."/>
            <person name="Yamamura Y."/>
            <person name="Yuan S."/>
            <person name="Shinozaki K."/>
            <person name="Davis R.W."/>
            <person name="Theologis A."/>
            <person name="Ecker J.R."/>
        </authorList>
    </citation>
    <scope>NUCLEOTIDE SEQUENCE [LARGE SCALE MRNA] (ISOFORM 2)</scope>
    <source>
        <strain>cv. Columbia</strain>
    </source>
</reference>
<reference key="5">
    <citation type="submission" date="2002-03" db="EMBL/GenBank/DDBJ databases">
        <title>Full-length cDNA from Arabidopsis thaliana.</title>
        <authorList>
            <person name="Brover V.V."/>
            <person name="Troukhan M.E."/>
            <person name="Alexandrov N.A."/>
            <person name="Lu Y.-P."/>
            <person name="Flavell R.B."/>
            <person name="Feldmann K.A."/>
        </authorList>
    </citation>
    <scope>NUCLEOTIDE SEQUENCE [LARGE SCALE MRNA] (ISOFORM 2)</scope>
</reference>
<reference key="6">
    <citation type="journal article" date="2002" name="J. Biol. Chem.">
        <title>Proteome map of the chloroplast lumen of Arabidopsis thaliana.</title>
        <authorList>
            <person name="Schubert M."/>
            <person name="Petersson U.A."/>
            <person name="Haas B.J."/>
            <person name="Funk C."/>
            <person name="Schroeder W.P."/>
            <person name="Kieselbach T."/>
        </authorList>
    </citation>
    <scope>PROTEIN SEQUENCE OF 76-89</scope>
    <scope>SUBCELLULAR LOCATION</scope>
</reference>
<reference key="7">
    <citation type="journal article" date="2002" name="Plant Cell">
        <title>Central functions of the lumenal and peripheral thylakoid proteome of Arabidopsis determined by experimentation and genome-wide prediction.</title>
        <authorList>
            <person name="Peltier J.-B."/>
            <person name="Emanuelsson O."/>
            <person name="Kalume D.E."/>
            <person name="Ytterberg J."/>
            <person name="Friso G."/>
            <person name="Rudella A."/>
            <person name="Liberles D.A."/>
            <person name="Soederberg L."/>
            <person name="Roepstorff P."/>
            <person name="von Heijne G."/>
            <person name="van Wijk K.J."/>
        </authorList>
    </citation>
    <scope>PROTEIN SEQUENCE OF N-TERMINUS</scope>
    <scope>IDENTIFICATION BY MASS SPECTROMETRY</scope>
</reference>
<reference key="8">
    <citation type="journal article" date="2004" name="Transgenic Res.">
        <title>Analysis of Arabidopsis PsbQA gene expression in transgenic tobacco reveals differential role of its promoter and transcribed region in organ-specific and light-mediated regulation.</title>
        <authorList>
            <person name="Gaur T."/>
            <person name="Tyagi A.K."/>
        </authorList>
    </citation>
    <scope>TISSUE SPECIFICITY</scope>
    <scope>INDUCTION BY LIGHT</scope>
</reference>
<reference key="9">
    <citation type="journal article" date="2006" name="J. Biol. Chem.">
        <title>The PsbQ protein is required in Arabidopsis for photosystem II assembly/stability and photoautotrophy under low light conditions.</title>
        <authorList>
            <person name="Yi X."/>
            <person name="Hargett S.R."/>
            <person name="Frankel L.K."/>
            <person name="Bricker T.M."/>
        </authorList>
    </citation>
    <scope>FUNCTION</scope>
</reference>
<reference key="10">
    <citation type="journal article" date="2008" name="PLoS ONE">
        <title>Sorting signals, N-terminal modifications and abundance of the chloroplast proteome.</title>
        <authorList>
            <person name="Zybailov B."/>
            <person name="Rutschow H."/>
            <person name="Friso G."/>
            <person name="Rudella A."/>
            <person name="Emanuelsson O."/>
            <person name="Sun Q."/>
            <person name="van Wijk K.J."/>
        </authorList>
    </citation>
    <scope>IDENTIFICATION BY MASS SPECTROMETRY</scope>
    <scope>SUBCELLULAR LOCATION [LARGE SCALE ANALYSIS]</scope>
</reference>
<reference key="11">
    <citation type="journal article" date="2012" name="J. Proteome Res.">
        <title>Identification of phosphoproteins in Arabidopsis thaliana leaves using polyethylene glycol fractionation, immobilized metal-ion affinity chromatography, two-dimensional gel electrophoresis and mass spectrometry.</title>
        <authorList>
            <person name="Aryal U.K."/>
            <person name="Krochko J.E."/>
            <person name="Ross A.R."/>
        </authorList>
    </citation>
    <scope>PHOSPHORYLATION [LARGE SCALE ANALYSIS] AT THR-189; TYR-209 AND THR-212</scope>
    <scope>IDENTIFICATION BY MASS SPECTROMETRY [LARGE SCALE ANALYSIS]</scope>
</reference>
<name>PSBQ1_ARATH</name>
<keyword id="KW-0025">Alternative splicing</keyword>
<keyword id="KW-0150">Chloroplast</keyword>
<keyword id="KW-0903">Direct protein sequencing</keyword>
<keyword id="KW-0472">Membrane</keyword>
<keyword id="KW-0597">Phosphoprotein</keyword>
<keyword id="KW-0602">Photosynthesis</keyword>
<keyword id="KW-0604">Photosystem II</keyword>
<keyword id="KW-0934">Plastid</keyword>
<keyword id="KW-1185">Reference proteome</keyword>
<keyword id="KW-0793">Thylakoid</keyword>
<keyword id="KW-0809">Transit peptide</keyword>
<organism>
    <name type="scientific">Arabidopsis thaliana</name>
    <name type="common">Mouse-ear cress</name>
    <dbReference type="NCBI Taxonomy" id="3702"/>
    <lineage>
        <taxon>Eukaryota</taxon>
        <taxon>Viridiplantae</taxon>
        <taxon>Streptophyta</taxon>
        <taxon>Embryophyta</taxon>
        <taxon>Tracheophyta</taxon>
        <taxon>Spermatophyta</taxon>
        <taxon>Magnoliopsida</taxon>
        <taxon>eudicotyledons</taxon>
        <taxon>Gunneridae</taxon>
        <taxon>Pentapetalae</taxon>
        <taxon>rosids</taxon>
        <taxon>malvids</taxon>
        <taxon>Brassicales</taxon>
        <taxon>Brassicaceae</taxon>
        <taxon>Camelineae</taxon>
        <taxon>Arabidopsis</taxon>
    </lineage>
</organism>
<comment type="function">
    <text evidence="6">Required for photosystem II assembly/stability and photoautotrophic growth under low light conditions.</text>
</comment>
<comment type="subcellular location">
    <subcellularLocation>
        <location evidence="3 7">Plastid</location>
        <location evidence="3 7">Chloroplast thylakoid membrane</location>
        <topology evidence="3">Peripheral membrane protein</topology>
        <orientation evidence="3">Lumenal side</orientation>
    </subcellularLocation>
    <text>Associated with the photosystem II complex.</text>
</comment>
<comment type="alternative products">
    <event type="alternative splicing"/>
    <isoform>
        <id>Q9XFT3-1</id>
        <name>1</name>
        <sequence type="displayed"/>
    </isoform>
    <isoform>
        <id>Q9XFT3-2</id>
        <name>2</name>
        <sequence type="described" ref="VSP_034388"/>
    </isoform>
</comment>
<comment type="tissue specificity">
    <text evidence="5">Expressed in green tissue, with high steady-state mRNA levels in leaves. Not expressed in roots.</text>
</comment>
<comment type="induction">
    <text evidence="2 5">By light.</text>
</comment>
<comment type="similarity">
    <text evidence="10">Belongs to the PsbQ family.</text>
</comment>
<comment type="sequence caution" evidence="10">
    <conflict type="erroneous gene model prediction">
        <sequence resource="EMBL-CDS" id="CAB40384"/>
    </conflict>
</comment>
<feature type="transit peptide" description="Chloroplast" evidence="1">
    <location>
        <begin position="1"/>
        <end position="44"/>
    </location>
</feature>
<feature type="transit peptide" description="Thylakoid" evidence="3 4">
    <location>
        <begin position="45"/>
        <end position="75"/>
    </location>
</feature>
<feature type="chain" id="PRO_0000029589" description="Oxygen-evolving enhancer protein 3-1, chloroplastic">
    <location>
        <begin position="76"/>
        <end position="224"/>
    </location>
</feature>
<feature type="modified residue" description="Phosphothreonine" evidence="11">
    <location>
        <position position="189"/>
    </location>
</feature>
<feature type="modified residue" description="Phosphotyrosine" evidence="11">
    <location>
        <position position="209"/>
    </location>
</feature>
<feature type="modified residue" description="Phosphothreonine" evidence="11">
    <location>
        <position position="212"/>
    </location>
</feature>
<feature type="splice variant" id="VSP_034388" description="In isoform 2." evidence="8 9">
    <location>
        <position position="94"/>
    </location>
</feature>
<protein>
    <recommendedName>
        <fullName>Oxygen-evolving enhancer protein 3-1, chloroplastic</fullName>
        <shortName>OEE3</shortName>
    </recommendedName>
    <alternativeName>
        <fullName>16 kDa subunit of oxygen evolving system of photosystem II</fullName>
    </alternativeName>
    <alternativeName>
        <fullName>OEC 16 kDa subunit</fullName>
    </alternativeName>
</protein>
<dbReference type="EMBL" id="Y16847">
    <property type="protein sequence ID" value="CAB40384.1"/>
    <property type="status" value="ALT_SEQ"/>
    <property type="molecule type" value="Genomic_DNA"/>
</dbReference>
<dbReference type="EMBL" id="AL021960">
    <property type="protein sequence ID" value="CAA17547.1"/>
    <property type="molecule type" value="Genomic_DNA"/>
</dbReference>
<dbReference type="EMBL" id="AL031187">
    <property type="protein sequence ID" value="CAA20194.1"/>
    <property type="molecule type" value="Genomic_DNA"/>
</dbReference>
<dbReference type="EMBL" id="AL161554">
    <property type="protein sequence ID" value="CAB79128.1"/>
    <property type="molecule type" value="Genomic_DNA"/>
</dbReference>
<dbReference type="EMBL" id="CP002687">
    <property type="protein sequence ID" value="AEE84435.1"/>
    <property type="molecule type" value="Genomic_DNA"/>
</dbReference>
<dbReference type="EMBL" id="CP002687">
    <property type="protein sequence ID" value="AEE84436.1"/>
    <property type="molecule type" value="Genomic_DNA"/>
</dbReference>
<dbReference type="EMBL" id="AY050328">
    <property type="protein sequence ID" value="AAK91345.1"/>
    <property type="molecule type" value="mRNA"/>
</dbReference>
<dbReference type="EMBL" id="AY094048">
    <property type="protein sequence ID" value="AAM16204.1"/>
    <property type="molecule type" value="mRNA"/>
</dbReference>
<dbReference type="EMBL" id="AY088330">
    <property type="protein sequence ID" value="AAM65869.1"/>
    <property type="molecule type" value="mRNA"/>
</dbReference>
<dbReference type="PIR" id="T04959">
    <property type="entry name" value="T04959"/>
</dbReference>
<dbReference type="RefSeq" id="NP_001031687.1">
    <molecule id="Q9XFT3-1"/>
    <property type="nucleotide sequence ID" value="NM_001036610.1"/>
</dbReference>
<dbReference type="RefSeq" id="NP_193860.1">
    <molecule id="Q9XFT3-2"/>
    <property type="nucleotide sequence ID" value="NM_118247.3"/>
</dbReference>
<dbReference type="SMR" id="Q9XFT3"/>
<dbReference type="BioGRID" id="13168">
    <property type="interactions" value="1"/>
</dbReference>
<dbReference type="FunCoup" id="Q9XFT3">
    <property type="interactions" value="1061"/>
</dbReference>
<dbReference type="STRING" id="3702.Q9XFT3"/>
<dbReference type="TCDB" id="3.E.2.2.3">
    <property type="family name" value="the photosynthetic reaction center (prc) family"/>
</dbReference>
<dbReference type="iPTMnet" id="Q9XFT3"/>
<dbReference type="PaxDb" id="3702-AT4G21280.2"/>
<dbReference type="ProteomicsDB" id="226418">
    <molecule id="Q9XFT3-1"/>
</dbReference>
<dbReference type="EnsemblPlants" id="AT4G21280.1">
    <molecule id="Q9XFT3-2"/>
    <property type="protein sequence ID" value="AT4G21280.1"/>
    <property type="gene ID" value="AT4G21280"/>
</dbReference>
<dbReference type="EnsemblPlants" id="AT4G21280.2">
    <molecule id="Q9XFT3-1"/>
    <property type="protein sequence ID" value="AT4G21280.2"/>
    <property type="gene ID" value="AT4G21280"/>
</dbReference>
<dbReference type="GeneID" id="827877"/>
<dbReference type="Gramene" id="AT4G21280.1">
    <molecule id="Q9XFT3-2"/>
    <property type="protein sequence ID" value="AT4G21280.1"/>
    <property type="gene ID" value="AT4G21280"/>
</dbReference>
<dbReference type="Gramene" id="AT4G21280.2">
    <molecule id="Q9XFT3-1"/>
    <property type="protein sequence ID" value="AT4G21280.2"/>
    <property type="gene ID" value="AT4G21280"/>
</dbReference>
<dbReference type="KEGG" id="ath:AT4G21280"/>
<dbReference type="Araport" id="AT4G21280"/>
<dbReference type="TAIR" id="AT4G21280">
    <property type="gene designation" value="PSBQA"/>
</dbReference>
<dbReference type="eggNOG" id="ENOG502QQF9">
    <property type="taxonomic scope" value="Eukaryota"/>
</dbReference>
<dbReference type="HOGENOM" id="CLU_085524_0_0_1"/>
<dbReference type="InParanoid" id="Q9XFT3"/>
<dbReference type="OMA" id="LFMAISN"/>
<dbReference type="OrthoDB" id="497707at2759"/>
<dbReference type="PhylomeDB" id="Q9XFT3"/>
<dbReference type="BioCyc" id="MetaCyc:AT4G21280-MONOMER"/>
<dbReference type="CD-CODE" id="4299E36E">
    <property type="entry name" value="Nucleolus"/>
</dbReference>
<dbReference type="PRO" id="PR:Q9XFT3"/>
<dbReference type="Proteomes" id="UP000006548">
    <property type="component" value="Chromosome 4"/>
</dbReference>
<dbReference type="ExpressionAtlas" id="Q9XFT3">
    <property type="expression patterns" value="baseline and differential"/>
</dbReference>
<dbReference type="GO" id="GO:0009507">
    <property type="term" value="C:chloroplast"/>
    <property type="evidence" value="ECO:0007005"/>
    <property type="project" value="TAIR"/>
</dbReference>
<dbReference type="GO" id="GO:0009570">
    <property type="term" value="C:chloroplast stroma"/>
    <property type="evidence" value="ECO:0007005"/>
    <property type="project" value="TAIR"/>
</dbReference>
<dbReference type="GO" id="GO:0009534">
    <property type="term" value="C:chloroplast thylakoid"/>
    <property type="evidence" value="ECO:0007005"/>
    <property type="project" value="TAIR"/>
</dbReference>
<dbReference type="GO" id="GO:0009535">
    <property type="term" value="C:chloroplast thylakoid membrane"/>
    <property type="evidence" value="ECO:0007005"/>
    <property type="project" value="TAIR"/>
</dbReference>
<dbReference type="GO" id="GO:0005829">
    <property type="term" value="C:cytosol"/>
    <property type="evidence" value="ECO:0007005"/>
    <property type="project" value="TAIR"/>
</dbReference>
<dbReference type="GO" id="GO:0019898">
    <property type="term" value="C:extrinsic component of membrane"/>
    <property type="evidence" value="ECO:0007669"/>
    <property type="project" value="InterPro"/>
</dbReference>
<dbReference type="GO" id="GO:0009654">
    <property type="term" value="C:photosystem II oxygen evolving complex"/>
    <property type="evidence" value="ECO:0007669"/>
    <property type="project" value="InterPro"/>
</dbReference>
<dbReference type="GO" id="GO:0009579">
    <property type="term" value="C:thylakoid"/>
    <property type="evidence" value="ECO:0007005"/>
    <property type="project" value="TAIR"/>
</dbReference>
<dbReference type="GO" id="GO:0031977">
    <property type="term" value="C:thylakoid lumen"/>
    <property type="evidence" value="ECO:0007005"/>
    <property type="project" value="TAIR"/>
</dbReference>
<dbReference type="GO" id="GO:0005509">
    <property type="term" value="F:calcium ion binding"/>
    <property type="evidence" value="ECO:0007669"/>
    <property type="project" value="InterPro"/>
</dbReference>
<dbReference type="GO" id="GO:0003729">
    <property type="term" value="F:mRNA binding"/>
    <property type="evidence" value="ECO:0000314"/>
    <property type="project" value="TAIR"/>
</dbReference>
<dbReference type="GO" id="GO:0015979">
    <property type="term" value="P:photosynthesis"/>
    <property type="evidence" value="ECO:0007669"/>
    <property type="project" value="UniProtKB-KW"/>
</dbReference>
<dbReference type="FunFam" id="1.20.120.290:FF:000001">
    <property type="entry name" value="Oxygen-evolving enhancer protein 3"/>
    <property type="match status" value="1"/>
</dbReference>
<dbReference type="Gene3D" id="1.20.120.290">
    <property type="entry name" value="Oxygen-evolving enhancer protein 3 (PsbQ), four-helix up-down bundle"/>
    <property type="match status" value="1"/>
</dbReference>
<dbReference type="InterPro" id="IPR023222">
    <property type="entry name" value="PsbQ-like_dom_sf"/>
</dbReference>
<dbReference type="InterPro" id="IPR008797">
    <property type="entry name" value="PSII_PsbQ"/>
</dbReference>
<dbReference type="InterPro" id="IPR054099">
    <property type="entry name" value="PSII_PsbQ_pln"/>
</dbReference>
<dbReference type="PANTHER" id="PTHR33399">
    <property type="entry name" value="OXYGEN-EVOLVING ENHANCER PROTEIN 3-1, CHLOROPLASTIC"/>
    <property type="match status" value="1"/>
</dbReference>
<dbReference type="PANTHER" id="PTHR33399:SF3">
    <property type="entry name" value="OXYGEN-EVOLVING ENHANCER PROTEIN 3-1, CHLOROPLASTIC"/>
    <property type="match status" value="1"/>
</dbReference>
<dbReference type="Pfam" id="PF05757">
    <property type="entry name" value="PsbQ"/>
    <property type="match status" value="1"/>
</dbReference>
<dbReference type="SUPFAM" id="SSF101112">
    <property type="entry name" value="Oxygen-evolving enhancer protein 3"/>
    <property type="match status" value="1"/>
</dbReference>
<sequence>MASMGGLHGASPAVLEGSLKINGSSRLNGSGRVAVAQRSRLVVRAQQSEETSRRSVIGLVAAGLAGGSFVQAVLADAISIKVGPPPAPSGGLPAGTDNSDQARDFALALKDRFYLQPLPPTEAAARAKESAKDIINVKPLIDRKAWPYVQNDLRSKASYLRYDLNTIISSKPKDEKKSLKDLTTKLFDTIDNLDYAAKKKSPSQAEKYYAETVSALNEVLAKLG</sequence>
<proteinExistence type="evidence at protein level"/>